<feature type="chain" id="PRO_1000093239" description="Phosphomethylpyrimidine synthase">
    <location>
        <begin position="1"/>
        <end position="614"/>
    </location>
</feature>
<feature type="binding site" evidence="1">
    <location>
        <position position="230"/>
    </location>
    <ligand>
        <name>substrate</name>
    </ligand>
</feature>
<feature type="binding site" evidence="1">
    <location>
        <position position="259"/>
    </location>
    <ligand>
        <name>substrate</name>
    </ligand>
</feature>
<feature type="binding site" evidence="1">
    <location>
        <position position="288"/>
    </location>
    <ligand>
        <name>substrate</name>
    </ligand>
</feature>
<feature type="binding site" evidence="1">
    <location>
        <position position="324"/>
    </location>
    <ligand>
        <name>substrate</name>
    </ligand>
</feature>
<feature type="binding site" evidence="1">
    <location>
        <begin position="344"/>
        <end position="346"/>
    </location>
    <ligand>
        <name>substrate</name>
    </ligand>
</feature>
<feature type="binding site" evidence="1">
    <location>
        <begin position="385"/>
        <end position="388"/>
    </location>
    <ligand>
        <name>substrate</name>
    </ligand>
</feature>
<feature type="binding site" evidence="1">
    <location>
        <position position="424"/>
    </location>
    <ligand>
        <name>substrate</name>
    </ligand>
</feature>
<feature type="binding site" evidence="1">
    <location>
        <position position="428"/>
    </location>
    <ligand>
        <name>Zn(2+)</name>
        <dbReference type="ChEBI" id="CHEBI:29105"/>
    </ligand>
</feature>
<feature type="binding site" evidence="1">
    <location>
        <position position="451"/>
    </location>
    <ligand>
        <name>substrate</name>
    </ligand>
</feature>
<feature type="binding site" evidence="1">
    <location>
        <position position="492"/>
    </location>
    <ligand>
        <name>Zn(2+)</name>
        <dbReference type="ChEBI" id="CHEBI:29105"/>
    </ligand>
</feature>
<feature type="binding site" evidence="1">
    <location>
        <position position="572"/>
    </location>
    <ligand>
        <name>[4Fe-4S] cluster</name>
        <dbReference type="ChEBI" id="CHEBI:49883"/>
        <note>4Fe-4S-S-AdoMet</note>
    </ligand>
</feature>
<feature type="binding site" evidence="1">
    <location>
        <position position="575"/>
    </location>
    <ligand>
        <name>[4Fe-4S] cluster</name>
        <dbReference type="ChEBI" id="CHEBI:49883"/>
        <note>4Fe-4S-S-AdoMet</note>
    </ligand>
</feature>
<feature type="binding site" evidence="1">
    <location>
        <position position="580"/>
    </location>
    <ligand>
        <name>[4Fe-4S] cluster</name>
        <dbReference type="ChEBI" id="CHEBI:49883"/>
        <note>4Fe-4S-S-AdoMet</note>
    </ligand>
</feature>
<organism>
    <name type="scientific">Stenotrophomonas maltophilia (strain K279a)</name>
    <dbReference type="NCBI Taxonomy" id="522373"/>
    <lineage>
        <taxon>Bacteria</taxon>
        <taxon>Pseudomonadati</taxon>
        <taxon>Pseudomonadota</taxon>
        <taxon>Gammaproteobacteria</taxon>
        <taxon>Lysobacterales</taxon>
        <taxon>Lysobacteraceae</taxon>
        <taxon>Stenotrophomonas</taxon>
        <taxon>Stenotrophomonas maltophilia group</taxon>
    </lineage>
</organism>
<dbReference type="EC" id="4.1.99.17" evidence="1"/>
<dbReference type="EMBL" id="AM743169">
    <property type="protein sequence ID" value="CAQ47312.1"/>
    <property type="molecule type" value="Genomic_DNA"/>
</dbReference>
<dbReference type="RefSeq" id="WP_012481195.1">
    <property type="nucleotide sequence ID" value="NC_010943.1"/>
</dbReference>
<dbReference type="SMR" id="B2FT70"/>
<dbReference type="EnsemblBacteria" id="CAQ47312">
    <property type="protein sequence ID" value="CAQ47312"/>
    <property type="gene ID" value="Smlt3909"/>
</dbReference>
<dbReference type="GeneID" id="93834893"/>
<dbReference type="KEGG" id="sml:Smlt3909"/>
<dbReference type="eggNOG" id="COG0422">
    <property type="taxonomic scope" value="Bacteria"/>
</dbReference>
<dbReference type="HOGENOM" id="CLU_013181_2_1_6"/>
<dbReference type="UniPathway" id="UPA00060"/>
<dbReference type="Proteomes" id="UP000008840">
    <property type="component" value="Chromosome"/>
</dbReference>
<dbReference type="GO" id="GO:0005829">
    <property type="term" value="C:cytosol"/>
    <property type="evidence" value="ECO:0007669"/>
    <property type="project" value="TreeGrafter"/>
</dbReference>
<dbReference type="GO" id="GO:0051539">
    <property type="term" value="F:4 iron, 4 sulfur cluster binding"/>
    <property type="evidence" value="ECO:0007669"/>
    <property type="project" value="UniProtKB-KW"/>
</dbReference>
<dbReference type="GO" id="GO:0016830">
    <property type="term" value="F:carbon-carbon lyase activity"/>
    <property type="evidence" value="ECO:0007669"/>
    <property type="project" value="InterPro"/>
</dbReference>
<dbReference type="GO" id="GO:0008270">
    <property type="term" value="F:zinc ion binding"/>
    <property type="evidence" value="ECO:0007669"/>
    <property type="project" value="UniProtKB-UniRule"/>
</dbReference>
<dbReference type="GO" id="GO:0009228">
    <property type="term" value="P:thiamine biosynthetic process"/>
    <property type="evidence" value="ECO:0007669"/>
    <property type="project" value="UniProtKB-KW"/>
</dbReference>
<dbReference type="GO" id="GO:0009229">
    <property type="term" value="P:thiamine diphosphate biosynthetic process"/>
    <property type="evidence" value="ECO:0007669"/>
    <property type="project" value="UniProtKB-UniRule"/>
</dbReference>
<dbReference type="FunFam" id="3.20.20.540:FF:000001">
    <property type="entry name" value="Phosphomethylpyrimidine synthase"/>
    <property type="match status" value="1"/>
</dbReference>
<dbReference type="Gene3D" id="6.10.250.620">
    <property type="match status" value="1"/>
</dbReference>
<dbReference type="Gene3D" id="3.20.20.540">
    <property type="entry name" value="Radical SAM ThiC family, central domain"/>
    <property type="match status" value="1"/>
</dbReference>
<dbReference type="HAMAP" id="MF_00089">
    <property type="entry name" value="ThiC"/>
    <property type="match status" value="1"/>
</dbReference>
<dbReference type="InterPro" id="IPR037509">
    <property type="entry name" value="ThiC"/>
</dbReference>
<dbReference type="InterPro" id="IPR025747">
    <property type="entry name" value="ThiC-associated_dom"/>
</dbReference>
<dbReference type="InterPro" id="IPR038521">
    <property type="entry name" value="ThiC/Bza_core_dom"/>
</dbReference>
<dbReference type="InterPro" id="IPR002817">
    <property type="entry name" value="ThiC/BzaA/B"/>
</dbReference>
<dbReference type="NCBIfam" id="NF006763">
    <property type="entry name" value="PRK09284.1"/>
    <property type="match status" value="1"/>
</dbReference>
<dbReference type="NCBIfam" id="NF009895">
    <property type="entry name" value="PRK13352.1"/>
    <property type="match status" value="1"/>
</dbReference>
<dbReference type="NCBIfam" id="TIGR00190">
    <property type="entry name" value="thiC"/>
    <property type="match status" value="1"/>
</dbReference>
<dbReference type="PANTHER" id="PTHR30557:SF1">
    <property type="entry name" value="PHOSPHOMETHYLPYRIMIDINE SYNTHASE, CHLOROPLASTIC"/>
    <property type="match status" value="1"/>
</dbReference>
<dbReference type="PANTHER" id="PTHR30557">
    <property type="entry name" value="THIAMINE BIOSYNTHESIS PROTEIN THIC"/>
    <property type="match status" value="1"/>
</dbReference>
<dbReference type="Pfam" id="PF13667">
    <property type="entry name" value="ThiC-associated"/>
    <property type="match status" value="1"/>
</dbReference>
<dbReference type="Pfam" id="PF01964">
    <property type="entry name" value="ThiC_Rad_SAM"/>
    <property type="match status" value="1"/>
</dbReference>
<dbReference type="SFLD" id="SFLDF00407">
    <property type="entry name" value="phosphomethylpyrimidine_syntha"/>
    <property type="match status" value="1"/>
</dbReference>
<dbReference type="SFLD" id="SFLDG01114">
    <property type="entry name" value="phosphomethylpyrimidine_syntha"/>
    <property type="match status" value="1"/>
</dbReference>
<dbReference type="SFLD" id="SFLDS00113">
    <property type="entry name" value="Radical_SAM_Phosphomethylpyrim"/>
    <property type="match status" value="1"/>
</dbReference>
<sequence>MNAQLSALQQQAQQLSASVTRPIPGSRKIHVPGSRPDLQVPMREIALTRTPTLFGGEENAPVTVYDTSGPYTDPEVRIDLSAGLPALRRGWVEERGDTEQLEGLSSSFGRDREHDPKLDAVRFPARSLPRRARAGANVTQMHYARRGIITPEMEFVAIRENQRLDAIRDAGLLQQHPGEAFGASIQKVITPEFVRDEIARGRAVLPNNINHPESEPMIIGRNFLTKINANIGNSAVSSGIAEEVEKLVWAIRWGGDTVMDLSTGKHIHETREWIIRNSPVAIGTVPIYQALEKVDGRAEALTWEIFRDTLIEQAEQGVDYFTIHAGVLLRYVPLTAKRVTGIVSRGGSIMAKWCLAHHKENFLYTHFEDICEIMKAYDVTFSLGDGLRPGCIADANDAAQFGELETLGELTKIAWKHDVQTMIEGPGHVPMQLIKENMDKQLRECGEAPFYTLGPLTTDIAPGYDHITSAIGAAMIGWFGTAMLCYVTPKEHLGLPNRQDVRDGIMAYRIAAHAADLAKGHPGAQVRDNALSKARFEFRWEDQFHLGLDPEKAKEFHDETLPKDAHKLAHFCSMCGPHFCSMKITQDVRDYAEAGMKEKSQEFRAGGAEVYRQG</sequence>
<name>THIC_STRMK</name>
<evidence type="ECO:0000255" key="1">
    <source>
        <dbReference type="HAMAP-Rule" id="MF_00089"/>
    </source>
</evidence>
<proteinExistence type="inferred from homology"/>
<gene>
    <name evidence="1" type="primary">thiC</name>
    <name type="ordered locus">Smlt3909</name>
</gene>
<accession>B2FT70</accession>
<comment type="function">
    <text evidence="1">Catalyzes the synthesis of the hydroxymethylpyrimidine phosphate (HMP-P) moiety of thiamine from aminoimidazole ribotide (AIR) in a radical S-adenosyl-L-methionine (SAM)-dependent reaction.</text>
</comment>
<comment type="catalytic activity">
    <reaction evidence="1">
        <text>5-amino-1-(5-phospho-beta-D-ribosyl)imidazole + S-adenosyl-L-methionine = 4-amino-2-methyl-5-(phosphooxymethyl)pyrimidine + CO + 5'-deoxyadenosine + formate + L-methionine + 3 H(+)</text>
        <dbReference type="Rhea" id="RHEA:24840"/>
        <dbReference type="ChEBI" id="CHEBI:15378"/>
        <dbReference type="ChEBI" id="CHEBI:15740"/>
        <dbReference type="ChEBI" id="CHEBI:17245"/>
        <dbReference type="ChEBI" id="CHEBI:17319"/>
        <dbReference type="ChEBI" id="CHEBI:57844"/>
        <dbReference type="ChEBI" id="CHEBI:58354"/>
        <dbReference type="ChEBI" id="CHEBI:59789"/>
        <dbReference type="ChEBI" id="CHEBI:137981"/>
        <dbReference type="EC" id="4.1.99.17"/>
    </reaction>
</comment>
<comment type="cofactor">
    <cofactor evidence="1">
        <name>[4Fe-4S] cluster</name>
        <dbReference type="ChEBI" id="CHEBI:49883"/>
    </cofactor>
    <text evidence="1">Binds 1 [4Fe-4S] cluster per subunit. The cluster is coordinated with 3 cysteines and an exchangeable S-adenosyl-L-methionine.</text>
</comment>
<comment type="pathway">
    <text evidence="1">Cofactor biosynthesis; thiamine diphosphate biosynthesis.</text>
</comment>
<comment type="subunit">
    <text evidence="1">Homodimer.</text>
</comment>
<comment type="similarity">
    <text evidence="1">Belongs to the ThiC family.</text>
</comment>
<reference key="1">
    <citation type="journal article" date="2008" name="Genome Biol.">
        <title>The complete genome, comparative and functional analysis of Stenotrophomonas maltophilia reveals an organism heavily shielded by drug resistance determinants.</title>
        <authorList>
            <person name="Crossman L.C."/>
            <person name="Gould V.C."/>
            <person name="Dow J.M."/>
            <person name="Vernikos G.S."/>
            <person name="Okazaki A."/>
            <person name="Sebaihia M."/>
            <person name="Saunders D."/>
            <person name="Arrowsmith C."/>
            <person name="Carver T."/>
            <person name="Peters N."/>
            <person name="Adlem E."/>
            <person name="Kerhornou A."/>
            <person name="Lord A."/>
            <person name="Murphy L."/>
            <person name="Seeger K."/>
            <person name="Squares R."/>
            <person name="Rutter S."/>
            <person name="Quail M.A."/>
            <person name="Rajandream M.A."/>
            <person name="Harris D."/>
            <person name="Churcher C."/>
            <person name="Bentley S.D."/>
            <person name="Parkhill J."/>
            <person name="Thomson N.R."/>
            <person name="Avison M.B."/>
        </authorList>
    </citation>
    <scope>NUCLEOTIDE SEQUENCE [LARGE SCALE GENOMIC DNA]</scope>
    <source>
        <strain>K279a</strain>
    </source>
</reference>
<protein>
    <recommendedName>
        <fullName evidence="1">Phosphomethylpyrimidine synthase</fullName>
        <ecNumber evidence="1">4.1.99.17</ecNumber>
    </recommendedName>
    <alternativeName>
        <fullName evidence="1">Hydroxymethylpyrimidine phosphate synthase</fullName>
        <shortName evidence="1">HMP-P synthase</shortName>
        <shortName evidence="1">HMP-phosphate synthase</shortName>
        <shortName evidence="1">HMPP synthase</shortName>
    </alternativeName>
    <alternativeName>
        <fullName evidence="1">Thiamine biosynthesis protein ThiC</fullName>
    </alternativeName>
</protein>
<keyword id="KW-0004">4Fe-4S</keyword>
<keyword id="KW-0408">Iron</keyword>
<keyword id="KW-0411">Iron-sulfur</keyword>
<keyword id="KW-0456">Lyase</keyword>
<keyword id="KW-0479">Metal-binding</keyword>
<keyword id="KW-1185">Reference proteome</keyword>
<keyword id="KW-0949">S-adenosyl-L-methionine</keyword>
<keyword id="KW-0784">Thiamine biosynthesis</keyword>
<keyword id="KW-0862">Zinc</keyword>